<name>RBFA_RHOPS</name>
<protein>
    <recommendedName>
        <fullName evidence="1">Ribosome-binding factor A</fullName>
    </recommendedName>
</protein>
<dbReference type="EMBL" id="CP000283">
    <property type="protein sequence ID" value="ABE37470.1"/>
    <property type="molecule type" value="Genomic_DNA"/>
</dbReference>
<dbReference type="SMR" id="Q13EL9"/>
<dbReference type="STRING" id="316057.RPD_0230"/>
<dbReference type="KEGG" id="rpd:RPD_0230"/>
<dbReference type="eggNOG" id="COG0858">
    <property type="taxonomic scope" value="Bacteria"/>
</dbReference>
<dbReference type="HOGENOM" id="CLU_089475_1_0_5"/>
<dbReference type="BioCyc" id="RPAL316057:RPD_RS01165-MONOMER"/>
<dbReference type="Proteomes" id="UP000001818">
    <property type="component" value="Chromosome"/>
</dbReference>
<dbReference type="GO" id="GO:0005829">
    <property type="term" value="C:cytosol"/>
    <property type="evidence" value="ECO:0007669"/>
    <property type="project" value="TreeGrafter"/>
</dbReference>
<dbReference type="GO" id="GO:0043024">
    <property type="term" value="F:ribosomal small subunit binding"/>
    <property type="evidence" value="ECO:0007669"/>
    <property type="project" value="TreeGrafter"/>
</dbReference>
<dbReference type="GO" id="GO:0030490">
    <property type="term" value="P:maturation of SSU-rRNA"/>
    <property type="evidence" value="ECO:0007669"/>
    <property type="project" value="UniProtKB-UniRule"/>
</dbReference>
<dbReference type="Gene3D" id="3.30.300.20">
    <property type="match status" value="1"/>
</dbReference>
<dbReference type="HAMAP" id="MF_00003">
    <property type="entry name" value="RbfA"/>
    <property type="match status" value="1"/>
</dbReference>
<dbReference type="InterPro" id="IPR015946">
    <property type="entry name" value="KH_dom-like_a/b"/>
</dbReference>
<dbReference type="InterPro" id="IPR000238">
    <property type="entry name" value="RbfA"/>
</dbReference>
<dbReference type="InterPro" id="IPR023799">
    <property type="entry name" value="RbfA_dom_sf"/>
</dbReference>
<dbReference type="InterPro" id="IPR020053">
    <property type="entry name" value="Ribosome-bd_factorA_CS"/>
</dbReference>
<dbReference type="NCBIfam" id="NF001802">
    <property type="entry name" value="PRK00521.2-5"/>
    <property type="match status" value="1"/>
</dbReference>
<dbReference type="NCBIfam" id="TIGR00082">
    <property type="entry name" value="rbfA"/>
    <property type="match status" value="1"/>
</dbReference>
<dbReference type="PANTHER" id="PTHR33515">
    <property type="entry name" value="RIBOSOME-BINDING FACTOR A, CHLOROPLASTIC-RELATED"/>
    <property type="match status" value="1"/>
</dbReference>
<dbReference type="PANTHER" id="PTHR33515:SF1">
    <property type="entry name" value="RIBOSOME-BINDING FACTOR A, CHLOROPLASTIC-RELATED"/>
    <property type="match status" value="1"/>
</dbReference>
<dbReference type="Pfam" id="PF02033">
    <property type="entry name" value="RBFA"/>
    <property type="match status" value="1"/>
</dbReference>
<dbReference type="SUPFAM" id="SSF89919">
    <property type="entry name" value="Ribosome-binding factor A, RbfA"/>
    <property type="match status" value="1"/>
</dbReference>
<dbReference type="PROSITE" id="PS01319">
    <property type="entry name" value="RBFA"/>
    <property type="match status" value="1"/>
</dbReference>
<evidence type="ECO:0000255" key="1">
    <source>
        <dbReference type="HAMAP-Rule" id="MF_00003"/>
    </source>
</evidence>
<keyword id="KW-0963">Cytoplasm</keyword>
<keyword id="KW-0690">Ribosome biogenesis</keyword>
<sequence length="136" mass="15506">MSRHQKPTGQSESPRKLRVGELVRHAVAEILAQGGVHDPVLETHLITVPEVRMSPDLKLATVYVMPLGGRDEKLVIAALEQHKRFLRGEVARRVNLKYAPEIRFRIDERFAEAERIEKLLRTPAVQKDLEPDSDQD</sequence>
<proteinExistence type="inferred from homology"/>
<accession>Q13EL9</accession>
<feature type="chain" id="PRO_0000321246" description="Ribosome-binding factor A">
    <location>
        <begin position="1"/>
        <end position="136"/>
    </location>
</feature>
<comment type="function">
    <text evidence="1">One of several proteins that assist in the late maturation steps of the functional core of the 30S ribosomal subunit. Associates with free 30S ribosomal subunits (but not with 30S subunits that are part of 70S ribosomes or polysomes). Required for efficient processing of 16S rRNA. May interact with the 5'-terminal helix region of 16S rRNA.</text>
</comment>
<comment type="subunit">
    <text evidence="1">Monomer. Binds 30S ribosomal subunits, but not 50S ribosomal subunits or 70S ribosomes.</text>
</comment>
<comment type="subcellular location">
    <subcellularLocation>
        <location evidence="1">Cytoplasm</location>
    </subcellularLocation>
</comment>
<comment type="similarity">
    <text evidence="1">Belongs to the RbfA family.</text>
</comment>
<organism>
    <name type="scientific">Rhodopseudomonas palustris (strain BisB5)</name>
    <dbReference type="NCBI Taxonomy" id="316057"/>
    <lineage>
        <taxon>Bacteria</taxon>
        <taxon>Pseudomonadati</taxon>
        <taxon>Pseudomonadota</taxon>
        <taxon>Alphaproteobacteria</taxon>
        <taxon>Hyphomicrobiales</taxon>
        <taxon>Nitrobacteraceae</taxon>
        <taxon>Rhodopseudomonas</taxon>
    </lineage>
</organism>
<reference key="1">
    <citation type="submission" date="2006-03" db="EMBL/GenBank/DDBJ databases">
        <title>Complete sequence of Rhodopseudomonas palustris BisB5.</title>
        <authorList>
            <consortium name="US DOE Joint Genome Institute"/>
            <person name="Copeland A."/>
            <person name="Lucas S."/>
            <person name="Lapidus A."/>
            <person name="Barry K."/>
            <person name="Detter J.C."/>
            <person name="Glavina del Rio T."/>
            <person name="Hammon N."/>
            <person name="Israni S."/>
            <person name="Dalin E."/>
            <person name="Tice H."/>
            <person name="Pitluck S."/>
            <person name="Chain P."/>
            <person name="Malfatti S."/>
            <person name="Shin M."/>
            <person name="Vergez L."/>
            <person name="Schmutz J."/>
            <person name="Larimer F."/>
            <person name="Land M."/>
            <person name="Hauser L."/>
            <person name="Pelletier D.A."/>
            <person name="Kyrpides N."/>
            <person name="Lykidis A."/>
            <person name="Oda Y."/>
            <person name="Harwood C.S."/>
            <person name="Richardson P."/>
        </authorList>
    </citation>
    <scope>NUCLEOTIDE SEQUENCE [LARGE SCALE GENOMIC DNA]</scope>
    <source>
        <strain>BisB5</strain>
    </source>
</reference>
<gene>
    <name evidence="1" type="primary">rbfA</name>
    <name type="ordered locus">RPD_0230</name>
</gene>